<keyword id="KW-0028">Amino-acid biosynthesis</keyword>
<keyword id="KW-0055">Arginine biosynthesis</keyword>
<keyword id="KW-0963">Cytoplasm</keyword>
<keyword id="KW-0456">Lyase</keyword>
<keyword id="KW-1185">Reference proteome</keyword>
<evidence type="ECO:0000255" key="1">
    <source>
        <dbReference type="HAMAP-Rule" id="MF_00006"/>
    </source>
</evidence>
<feature type="chain" id="PRO_1000116200" description="Argininosuccinate lyase">
    <location>
        <begin position="1"/>
        <end position="462"/>
    </location>
</feature>
<proteinExistence type="inferred from homology"/>
<organism>
    <name type="scientific">Gloeothece citriformis (strain PCC 7424)</name>
    <name type="common">Cyanothece sp. (strain PCC 7424)</name>
    <dbReference type="NCBI Taxonomy" id="65393"/>
    <lineage>
        <taxon>Bacteria</taxon>
        <taxon>Bacillati</taxon>
        <taxon>Cyanobacteriota</taxon>
        <taxon>Cyanophyceae</taxon>
        <taxon>Oscillatoriophycideae</taxon>
        <taxon>Chroococcales</taxon>
        <taxon>Aphanothecaceae</taxon>
        <taxon>Gloeothece</taxon>
        <taxon>Gloeothece citriformis</taxon>
    </lineage>
</organism>
<comment type="catalytic activity">
    <reaction evidence="1">
        <text>2-(N(omega)-L-arginino)succinate = fumarate + L-arginine</text>
        <dbReference type="Rhea" id="RHEA:24020"/>
        <dbReference type="ChEBI" id="CHEBI:29806"/>
        <dbReference type="ChEBI" id="CHEBI:32682"/>
        <dbReference type="ChEBI" id="CHEBI:57472"/>
        <dbReference type="EC" id="4.3.2.1"/>
    </reaction>
</comment>
<comment type="pathway">
    <text evidence="1">Amino-acid biosynthesis; L-arginine biosynthesis; L-arginine from L-ornithine and carbamoyl phosphate: step 3/3.</text>
</comment>
<comment type="subcellular location">
    <subcellularLocation>
        <location evidence="1">Cytoplasm</location>
    </subcellularLocation>
</comment>
<comment type="similarity">
    <text evidence="1">Belongs to the lyase 1 family. Argininosuccinate lyase subfamily.</text>
</comment>
<gene>
    <name evidence="1" type="primary">argH</name>
    <name type="ordered locus">PCC7424_2889</name>
</gene>
<sequence>MTEKKTWSDRFEGSLHPAIAYFNASIEFDIELIEYDLTGSIAHAKMLAHTGIISETEAQQLVTGLEQIRAEYREGQFNPGIDQEDVHFAVERRLTEIIGDVGKKLHTARSRNDQVGTDIRLYLRDQIDQIRGQIREFQQVLLDHAQNHVETLIPGYTHLQRAQPVSLAHHLLAYFHMAQRDWERLGEIRKRTNISPLGSGALAGTTFPIDRHYSAQLLQFEGVYPNSLDGVSDRDFAIEFLNAASLIMVHLSRLSEEMILWSSQEFSFITLTDSCATGSSIMPQKKNPDVPELIRGKTGRVFGHLQGLLVLMKGLPLAYNKDLQEDKEALFDGVKTVKGCLEAMTILLSEGIKFKTERLTQAVNEDFSNATDVADYLAARGVPFREAYNLVGKVVKTSLAAGKLLKDLTLDQWKELHPAFEADIYEAIAPSQVVAARNSYGGTGFKQVRQAILTAKTLLESN</sequence>
<reference key="1">
    <citation type="journal article" date="2011" name="MBio">
        <title>Novel metabolic attributes of the genus Cyanothece, comprising a group of unicellular nitrogen-fixing Cyanobacteria.</title>
        <authorList>
            <person name="Bandyopadhyay A."/>
            <person name="Elvitigala T."/>
            <person name="Welsh E."/>
            <person name="Stockel J."/>
            <person name="Liberton M."/>
            <person name="Min H."/>
            <person name="Sherman L.A."/>
            <person name="Pakrasi H.B."/>
        </authorList>
    </citation>
    <scope>NUCLEOTIDE SEQUENCE [LARGE SCALE GENOMIC DNA]</scope>
    <source>
        <strain>PCC 7424</strain>
    </source>
</reference>
<name>ARLY_GLOC7</name>
<protein>
    <recommendedName>
        <fullName evidence="1">Argininosuccinate lyase</fullName>
        <shortName evidence="1">ASAL</shortName>
        <ecNumber evidence="1">4.3.2.1</ecNumber>
    </recommendedName>
    <alternativeName>
        <fullName evidence="1">Arginosuccinase</fullName>
    </alternativeName>
</protein>
<accession>B7K8U6</accession>
<dbReference type="EC" id="4.3.2.1" evidence="1"/>
<dbReference type="EMBL" id="CP001291">
    <property type="protein sequence ID" value="ACK71294.1"/>
    <property type="molecule type" value="Genomic_DNA"/>
</dbReference>
<dbReference type="RefSeq" id="WP_015954894.1">
    <property type="nucleotide sequence ID" value="NC_011729.1"/>
</dbReference>
<dbReference type="SMR" id="B7K8U6"/>
<dbReference type="STRING" id="65393.PCC7424_2889"/>
<dbReference type="KEGG" id="cyc:PCC7424_2889"/>
<dbReference type="eggNOG" id="COG0165">
    <property type="taxonomic scope" value="Bacteria"/>
</dbReference>
<dbReference type="HOGENOM" id="CLU_027272_2_3_3"/>
<dbReference type="OrthoDB" id="9769623at2"/>
<dbReference type="UniPathway" id="UPA00068">
    <property type="reaction ID" value="UER00114"/>
</dbReference>
<dbReference type="Proteomes" id="UP000002384">
    <property type="component" value="Chromosome"/>
</dbReference>
<dbReference type="GO" id="GO:0005829">
    <property type="term" value="C:cytosol"/>
    <property type="evidence" value="ECO:0007669"/>
    <property type="project" value="TreeGrafter"/>
</dbReference>
<dbReference type="GO" id="GO:0004056">
    <property type="term" value="F:argininosuccinate lyase activity"/>
    <property type="evidence" value="ECO:0007669"/>
    <property type="project" value="UniProtKB-UniRule"/>
</dbReference>
<dbReference type="GO" id="GO:0042450">
    <property type="term" value="P:arginine biosynthetic process via ornithine"/>
    <property type="evidence" value="ECO:0007669"/>
    <property type="project" value="InterPro"/>
</dbReference>
<dbReference type="GO" id="GO:0006526">
    <property type="term" value="P:L-arginine biosynthetic process"/>
    <property type="evidence" value="ECO:0007669"/>
    <property type="project" value="UniProtKB-UniRule"/>
</dbReference>
<dbReference type="CDD" id="cd01359">
    <property type="entry name" value="Argininosuccinate_lyase"/>
    <property type="match status" value="1"/>
</dbReference>
<dbReference type="FunFam" id="1.10.275.10:FF:000002">
    <property type="entry name" value="Argininosuccinate lyase"/>
    <property type="match status" value="1"/>
</dbReference>
<dbReference type="FunFam" id="1.10.40.30:FF:000001">
    <property type="entry name" value="Argininosuccinate lyase"/>
    <property type="match status" value="1"/>
</dbReference>
<dbReference type="FunFam" id="1.20.200.10:FF:000015">
    <property type="entry name" value="argininosuccinate lyase isoform X2"/>
    <property type="match status" value="1"/>
</dbReference>
<dbReference type="Gene3D" id="1.10.40.30">
    <property type="entry name" value="Fumarase/aspartase (C-terminal domain)"/>
    <property type="match status" value="1"/>
</dbReference>
<dbReference type="Gene3D" id="1.20.200.10">
    <property type="entry name" value="Fumarase/aspartase (Central domain)"/>
    <property type="match status" value="1"/>
</dbReference>
<dbReference type="Gene3D" id="1.10.275.10">
    <property type="entry name" value="Fumarase/aspartase (N-terminal domain)"/>
    <property type="match status" value="1"/>
</dbReference>
<dbReference type="HAMAP" id="MF_00006">
    <property type="entry name" value="Arg_succ_lyase"/>
    <property type="match status" value="1"/>
</dbReference>
<dbReference type="InterPro" id="IPR029419">
    <property type="entry name" value="Arg_succ_lyase_C"/>
</dbReference>
<dbReference type="InterPro" id="IPR009049">
    <property type="entry name" value="Argininosuccinate_lyase"/>
</dbReference>
<dbReference type="InterPro" id="IPR024083">
    <property type="entry name" value="Fumarase/histidase_N"/>
</dbReference>
<dbReference type="InterPro" id="IPR020557">
    <property type="entry name" value="Fumarate_lyase_CS"/>
</dbReference>
<dbReference type="InterPro" id="IPR000362">
    <property type="entry name" value="Fumarate_lyase_fam"/>
</dbReference>
<dbReference type="InterPro" id="IPR022761">
    <property type="entry name" value="Fumarate_lyase_N"/>
</dbReference>
<dbReference type="InterPro" id="IPR008948">
    <property type="entry name" value="L-Aspartase-like"/>
</dbReference>
<dbReference type="NCBIfam" id="TIGR00838">
    <property type="entry name" value="argH"/>
    <property type="match status" value="1"/>
</dbReference>
<dbReference type="PANTHER" id="PTHR43814">
    <property type="entry name" value="ARGININOSUCCINATE LYASE"/>
    <property type="match status" value="1"/>
</dbReference>
<dbReference type="PANTHER" id="PTHR43814:SF1">
    <property type="entry name" value="ARGININOSUCCINATE LYASE"/>
    <property type="match status" value="1"/>
</dbReference>
<dbReference type="Pfam" id="PF14698">
    <property type="entry name" value="ASL_C2"/>
    <property type="match status" value="1"/>
</dbReference>
<dbReference type="Pfam" id="PF00206">
    <property type="entry name" value="Lyase_1"/>
    <property type="match status" value="1"/>
</dbReference>
<dbReference type="PRINTS" id="PR00145">
    <property type="entry name" value="ARGSUCLYASE"/>
</dbReference>
<dbReference type="PRINTS" id="PR00149">
    <property type="entry name" value="FUMRATELYASE"/>
</dbReference>
<dbReference type="SUPFAM" id="SSF48557">
    <property type="entry name" value="L-aspartase-like"/>
    <property type="match status" value="1"/>
</dbReference>
<dbReference type="PROSITE" id="PS00163">
    <property type="entry name" value="FUMARATE_LYASES"/>
    <property type="match status" value="1"/>
</dbReference>